<accession>Q8TQQ2</accession>
<protein>
    <recommendedName>
        <fullName evidence="1">2-phospho-L-lactate guanylyltransferase</fullName>
        <shortName evidence="1">LP guanylyltransferase</shortName>
        <ecNumber evidence="1">2.7.7.68</ecNumber>
    </recommendedName>
</protein>
<name>COFC_METAC</name>
<sequence length="208" mass="22927">MRAVIPYKKAGAKSRLSPVLSLEEREEFVELMLNQVIDSLRGAGIEKIDILSPSVYGLEDMTKARVLLDEDDLNEALNRYLAGSEEPVLIVMADLPLLAPAHIKGISSTEKDVCIVPGKGGGTNALFIKNPSRYRVKYYGSSFLTHCSIATDTGQNFEIYDSFLAGTDIDEPEDLVELLIHGKGPAKEYISRKFRLEVSRGRVGLVLL</sequence>
<dbReference type="EC" id="2.7.7.68" evidence="1"/>
<dbReference type="EMBL" id="AE010299">
    <property type="protein sequence ID" value="AAM04902.1"/>
    <property type="molecule type" value="Genomic_DNA"/>
</dbReference>
<dbReference type="RefSeq" id="WP_011021502.1">
    <property type="nucleotide sequence ID" value="NC_003552.1"/>
</dbReference>
<dbReference type="SMR" id="Q8TQQ2"/>
<dbReference type="FunCoup" id="Q8TQQ2">
    <property type="interactions" value="94"/>
</dbReference>
<dbReference type="STRING" id="188937.MA_1488"/>
<dbReference type="EnsemblBacteria" id="AAM04902">
    <property type="protein sequence ID" value="AAM04902"/>
    <property type="gene ID" value="MA_1488"/>
</dbReference>
<dbReference type="GeneID" id="1473376"/>
<dbReference type="KEGG" id="mac:MA_1488"/>
<dbReference type="HOGENOM" id="CLU_076569_2_0_2"/>
<dbReference type="InParanoid" id="Q8TQQ2"/>
<dbReference type="OrthoDB" id="11179at2157"/>
<dbReference type="PhylomeDB" id="Q8TQQ2"/>
<dbReference type="UniPathway" id="UPA00071"/>
<dbReference type="Proteomes" id="UP000002487">
    <property type="component" value="Chromosome"/>
</dbReference>
<dbReference type="GO" id="GO:0005525">
    <property type="term" value="F:GTP binding"/>
    <property type="evidence" value="ECO:0007669"/>
    <property type="project" value="UniProtKB-KW"/>
</dbReference>
<dbReference type="GO" id="GO:0043814">
    <property type="term" value="F:phospholactate guanylyltransferase activity"/>
    <property type="evidence" value="ECO:0007669"/>
    <property type="project" value="UniProtKB-EC"/>
</dbReference>
<dbReference type="GO" id="GO:0052645">
    <property type="term" value="P:F420-0 metabolic process"/>
    <property type="evidence" value="ECO:0007669"/>
    <property type="project" value="UniProtKB-UniRule"/>
</dbReference>
<dbReference type="Gene3D" id="6.10.140.50">
    <property type="match status" value="1"/>
</dbReference>
<dbReference type="Gene3D" id="3.90.550.10">
    <property type="entry name" value="Spore Coat Polysaccharide Biosynthesis Protein SpsA, Chain A"/>
    <property type="match status" value="1"/>
</dbReference>
<dbReference type="HAMAP" id="MF_02114">
    <property type="entry name" value="CofC"/>
    <property type="match status" value="1"/>
</dbReference>
<dbReference type="InterPro" id="IPR002835">
    <property type="entry name" value="CofC"/>
</dbReference>
<dbReference type="InterPro" id="IPR029044">
    <property type="entry name" value="Nucleotide-diphossugar_trans"/>
</dbReference>
<dbReference type="NCBIfam" id="TIGR03552">
    <property type="entry name" value="F420_cofC"/>
    <property type="match status" value="1"/>
</dbReference>
<dbReference type="PANTHER" id="PTHR40392">
    <property type="entry name" value="2-PHOSPHO-L-LACTATE GUANYLYLTRANSFERASE"/>
    <property type="match status" value="1"/>
</dbReference>
<dbReference type="PANTHER" id="PTHR40392:SF1">
    <property type="entry name" value="2-PHOSPHO-L-LACTATE GUANYLYLTRANSFERASE"/>
    <property type="match status" value="1"/>
</dbReference>
<dbReference type="Pfam" id="PF01983">
    <property type="entry name" value="CofC"/>
    <property type="match status" value="1"/>
</dbReference>
<dbReference type="SUPFAM" id="SSF53448">
    <property type="entry name" value="Nucleotide-diphospho-sugar transferases"/>
    <property type="match status" value="1"/>
</dbReference>
<gene>
    <name evidence="1" type="primary">cofC</name>
    <name type="ordered locus">MA_1488</name>
</gene>
<keyword id="KW-0342">GTP-binding</keyword>
<keyword id="KW-0547">Nucleotide-binding</keyword>
<keyword id="KW-0548">Nucleotidyltransferase</keyword>
<keyword id="KW-1185">Reference proteome</keyword>
<keyword id="KW-0808">Transferase</keyword>
<comment type="function">
    <text evidence="1">Guanylyltransferase that catalyzes the activation of (2S)-2-phospholactate (2-PL) as (2S)-lactyl-2-diphospho-5'-guanosine, via the condensation of 2-PL with GTP. It is involved in the biosynthesis of coenzyme F420, a hydride carrier cofactor.</text>
</comment>
<comment type="catalytic activity">
    <reaction evidence="1">
        <text>(2S)-2-phospholactate + GTP + H(+) = (2S)-lactyl-2-diphospho-5'-guanosine + diphosphate</text>
        <dbReference type="Rhea" id="RHEA:63424"/>
        <dbReference type="ChEBI" id="CHEBI:15378"/>
        <dbReference type="ChEBI" id="CHEBI:33019"/>
        <dbReference type="ChEBI" id="CHEBI:37565"/>
        <dbReference type="ChEBI" id="CHEBI:59435"/>
        <dbReference type="ChEBI" id="CHEBI:59906"/>
        <dbReference type="EC" id="2.7.7.68"/>
    </reaction>
</comment>
<comment type="pathway">
    <text evidence="1">Cofactor biosynthesis; coenzyme F420 biosynthesis.</text>
</comment>
<comment type="subunit">
    <text evidence="1">Homodimer.</text>
</comment>
<comment type="similarity">
    <text evidence="1">Belongs to the CofC family.</text>
</comment>
<proteinExistence type="inferred from homology"/>
<organism>
    <name type="scientific">Methanosarcina acetivorans (strain ATCC 35395 / DSM 2834 / JCM 12185 / C2A)</name>
    <dbReference type="NCBI Taxonomy" id="188937"/>
    <lineage>
        <taxon>Archaea</taxon>
        <taxon>Methanobacteriati</taxon>
        <taxon>Methanobacteriota</taxon>
        <taxon>Stenosarchaea group</taxon>
        <taxon>Methanomicrobia</taxon>
        <taxon>Methanosarcinales</taxon>
        <taxon>Methanosarcinaceae</taxon>
        <taxon>Methanosarcina</taxon>
    </lineage>
</organism>
<reference key="1">
    <citation type="journal article" date="2002" name="Genome Res.">
        <title>The genome of Methanosarcina acetivorans reveals extensive metabolic and physiological diversity.</title>
        <authorList>
            <person name="Galagan J.E."/>
            <person name="Nusbaum C."/>
            <person name="Roy A."/>
            <person name="Endrizzi M.G."/>
            <person name="Macdonald P."/>
            <person name="FitzHugh W."/>
            <person name="Calvo S."/>
            <person name="Engels R."/>
            <person name="Smirnov S."/>
            <person name="Atnoor D."/>
            <person name="Brown A."/>
            <person name="Allen N."/>
            <person name="Naylor J."/>
            <person name="Stange-Thomann N."/>
            <person name="DeArellano K."/>
            <person name="Johnson R."/>
            <person name="Linton L."/>
            <person name="McEwan P."/>
            <person name="McKernan K."/>
            <person name="Talamas J."/>
            <person name="Tirrell A."/>
            <person name="Ye W."/>
            <person name="Zimmer A."/>
            <person name="Barber R.D."/>
            <person name="Cann I."/>
            <person name="Graham D.E."/>
            <person name="Grahame D.A."/>
            <person name="Guss A.M."/>
            <person name="Hedderich R."/>
            <person name="Ingram-Smith C."/>
            <person name="Kuettner H.C."/>
            <person name="Krzycki J.A."/>
            <person name="Leigh J.A."/>
            <person name="Li W."/>
            <person name="Liu J."/>
            <person name="Mukhopadhyay B."/>
            <person name="Reeve J.N."/>
            <person name="Smith K."/>
            <person name="Springer T.A."/>
            <person name="Umayam L.A."/>
            <person name="White O."/>
            <person name="White R.H."/>
            <person name="de Macario E.C."/>
            <person name="Ferry J.G."/>
            <person name="Jarrell K.F."/>
            <person name="Jing H."/>
            <person name="Macario A.J.L."/>
            <person name="Paulsen I.T."/>
            <person name="Pritchett M."/>
            <person name="Sowers K.R."/>
            <person name="Swanson R.V."/>
            <person name="Zinder S.H."/>
            <person name="Lander E."/>
            <person name="Metcalf W.W."/>
            <person name="Birren B."/>
        </authorList>
    </citation>
    <scope>NUCLEOTIDE SEQUENCE [LARGE SCALE GENOMIC DNA]</scope>
    <source>
        <strain>ATCC 35395 / DSM 2834 / JCM 12185 / C2A</strain>
    </source>
</reference>
<evidence type="ECO:0000255" key="1">
    <source>
        <dbReference type="HAMAP-Rule" id="MF_02114"/>
    </source>
</evidence>
<feature type="chain" id="PRO_0000398755" description="2-phospho-L-lactate guanylyltransferase">
    <location>
        <begin position="1"/>
        <end position="208"/>
    </location>
</feature>